<dbReference type="EC" id="2.4.2.21" evidence="1"/>
<dbReference type="EMBL" id="CP001124">
    <property type="protein sequence ID" value="ACH40805.1"/>
    <property type="molecule type" value="Genomic_DNA"/>
</dbReference>
<dbReference type="RefSeq" id="WP_012532241.1">
    <property type="nucleotide sequence ID" value="NC_011146.1"/>
</dbReference>
<dbReference type="SMR" id="B5EEL9"/>
<dbReference type="STRING" id="404380.Gbem_3813"/>
<dbReference type="KEGG" id="gbm:Gbem_3813"/>
<dbReference type="eggNOG" id="COG2038">
    <property type="taxonomic scope" value="Bacteria"/>
</dbReference>
<dbReference type="HOGENOM" id="CLU_002982_0_0_7"/>
<dbReference type="OrthoDB" id="9781491at2"/>
<dbReference type="UniPathway" id="UPA00061">
    <property type="reaction ID" value="UER00516"/>
</dbReference>
<dbReference type="Proteomes" id="UP000008825">
    <property type="component" value="Chromosome"/>
</dbReference>
<dbReference type="GO" id="GO:0008939">
    <property type="term" value="F:nicotinate-nucleotide-dimethylbenzimidazole phosphoribosyltransferase activity"/>
    <property type="evidence" value="ECO:0007669"/>
    <property type="project" value="UniProtKB-UniRule"/>
</dbReference>
<dbReference type="GO" id="GO:0009236">
    <property type="term" value="P:cobalamin biosynthetic process"/>
    <property type="evidence" value="ECO:0007669"/>
    <property type="project" value="UniProtKB-KW"/>
</dbReference>
<dbReference type="CDD" id="cd02439">
    <property type="entry name" value="DMB-PRT_CobT"/>
    <property type="match status" value="1"/>
</dbReference>
<dbReference type="FunFam" id="3.40.50.10210:FF:000001">
    <property type="entry name" value="Nicotinate-nucleotide--dimethylbenzimidazole phosphoribosyltransferase"/>
    <property type="match status" value="1"/>
</dbReference>
<dbReference type="Gene3D" id="1.10.1610.10">
    <property type="match status" value="1"/>
</dbReference>
<dbReference type="Gene3D" id="3.40.50.10210">
    <property type="match status" value="1"/>
</dbReference>
<dbReference type="HAMAP" id="MF_00230">
    <property type="entry name" value="CobT"/>
    <property type="match status" value="1"/>
</dbReference>
<dbReference type="InterPro" id="IPR003200">
    <property type="entry name" value="Nict_dMeBzImd_PRibTrfase"/>
</dbReference>
<dbReference type="InterPro" id="IPR017846">
    <property type="entry name" value="Nict_dMeBzImd_PRibTrfase_bact"/>
</dbReference>
<dbReference type="InterPro" id="IPR023195">
    <property type="entry name" value="Nict_dMeBzImd_PRibTrfase_N"/>
</dbReference>
<dbReference type="InterPro" id="IPR036087">
    <property type="entry name" value="Nict_dMeBzImd_PRibTrfase_sf"/>
</dbReference>
<dbReference type="NCBIfam" id="TIGR03160">
    <property type="entry name" value="cobT_DBIPRT"/>
    <property type="match status" value="1"/>
</dbReference>
<dbReference type="NCBIfam" id="NF000996">
    <property type="entry name" value="PRK00105.1"/>
    <property type="match status" value="1"/>
</dbReference>
<dbReference type="PANTHER" id="PTHR43463">
    <property type="entry name" value="NICOTINATE-NUCLEOTIDE--DIMETHYLBENZIMIDAZOLE PHOSPHORIBOSYLTRANSFERASE"/>
    <property type="match status" value="1"/>
</dbReference>
<dbReference type="PANTHER" id="PTHR43463:SF1">
    <property type="entry name" value="NICOTINATE-NUCLEOTIDE--DIMETHYLBENZIMIDAZOLE PHOSPHORIBOSYLTRANSFERASE"/>
    <property type="match status" value="1"/>
</dbReference>
<dbReference type="Pfam" id="PF02277">
    <property type="entry name" value="DBI_PRT"/>
    <property type="match status" value="1"/>
</dbReference>
<dbReference type="SUPFAM" id="SSF52733">
    <property type="entry name" value="Nicotinate mononucleotide:5,6-dimethylbenzimidazole phosphoribosyltransferase (CobT)"/>
    <property type="match status" value="1"/>
</dbReference>
<keyword id="KW-0169">Cobalamin biosynthesis</keyword>
<keyword id="KW-0328">Glycosyltransferase</keyword>
<keyword id="KW-1185">Reference proteome</keyword>
<keyword id="KW-0808">Transferase</keyword>
<proteinExistence type="inferred from homology"/>
<gene>
    <name evidence="1" type="primary">cobT</name>
    <name type="ordered locus">Gbem_3813</name>
</gene>
<organism>
    <name type="scientific">Citrifermentans bemidjiense (strain ATCC BAA-1014 / DSM 16622 / JCM 12645 / Bem)</name>
    <name type="common">Geobacter bemidjiensis</name>
    <dbReference type="NCBI Taxonomy" id="404380"/>
    <lineage>
        <taxon>Bacteria</taxon>
        <taxon>Pseudomonadati</taxon>
        <taxon>Thermodesulfobacteriota</taxon>
        <taxon>Desulfuromonadia</taxon>
        <taxon>Geobacterales</taxon>
        <taxon>Geobacteraceae</taxon>
        <taxon>Citrifermentans</taxon>
    </lineage>
</organism>
<sequence>MELLESALAKIQPVDEALLTEAQAKLDNKTKPPGSLGLLEEMARRFAAITGDLSPKMGKKVIFTFAGDHGIVEEGVSLFPKEVTPQMVLNFLRGGAGVNVLARHAGAEVRVVDVGVDYDFEPTEGLIIRKIAKGTRNFAKESAMTREEAVAAIEVGIALADRAKAEGISMVGTGEMGIGNTSPSSAIIAAFAGCSVREVTHRGTGIGDQALEHKIKVIQAGLDLNRPNPEDPLDVLSKVGGLEIAGIAGLVLGAAANRIPVVVDGFISTAGALIACEMHPNVREYIFAAHNSVEIGHQMMLQRIGAKPILDLQLRLGEGTGAALAMGLIEAGVKVLNEMATFEEAGVASS</sequence>
<accession>B5EEL9</accession>
<reference key="1">
    <citation type="submission" date="2008-07" db="EMBL/GenBank/DDBJ databases">
        <title>Complete sequence of Geobacter bemidjiensis BEM.</title>
        <authorList>
            <consortium name="US DOE Joint Genome Institute"/>
            <person name="Lucas S."/>
            <person name="Copeland A."/>
            <person name="Lapidus A."/>
            <person name="Glavina del Rio T."/>
            <person name="Dalin E."/>
            <person name="Tice H."/>
            <person name="Bruce D."/>
            <person name="Goodwin L."/>
            <person name="Pitluck S."/>
            <person name="Kiss H."/>
            <person name="Brettin T."/>
            <person name="Detter J.C."/>
            <person name="Han C."/>
            <person name="Kuske C.R."/>
            <person name="Schmutz J."/>
            <person name="Larimer F."/>
            <person name="Land M."/>
            <person name="Hauser L."/>
            <person name="Kyrpides N."/>
            <person name="Lykidis A."/>
            <person name="Lovley D."/>
            <person name="Richardson P."/>
        </authorList>
    </citation>
    <scope>NUCLEOTIDE SEQUENCE [LARGE SCALE GENOMIC DNA]</scope>
    <source>
        <strain>ATCC BAA-1014 / DSM 16622 / JCM 12645 / Bem</strain>
    </source>
</reference>
<comment type="function">
    <text evidence="1">Catalyzes the synthesis of alpha-ribazole-5'-phosphate from nicotinate mononucleotide (NAMN) and 5,6-dimethylbenzimidazole (DMB).</text>
</comment>
<comment type="catalytic activity">
    <reaction evidence="1">
        <text>5,6-dimethylbenzimidazole + nicotinate beta-D-ribonucleotide = alpha-ribazole 5'-phosphate + nicotinate + H(+)</text>
        <dbReference type="Rhea" id="RHEA:11196"/>
        <dbReference type="ChEBI" id="CHEBI:15378"/>
        <dbReference type="ChEBI" id="CHEBI:15890"/>
        <dbReference type="ChEBI" id="CHEBI:32544"/>
        <dbReference type="ChEBI" id="CHEBI:57502"/>
        <dbReference type="ChEBI" id="CHEBI:57918"/>
        <dbReference type="EC" id="2.4.2.21"/>
    </reaction>
</comment>
<comment type="pathway">
    <text evidence="1">Nucleoside biosynthesis; alpha-ribazole biosynthesis; alpha-ribazole from 5,6-dimethylbenzimidazole: step 1/2.</text>
</comment>
<comment type="similarity">
    <text evidence="1">Belongs to the CobT family.</text>
</comment>
<feature type="chain" id="PRO_1000100465" description="Nicotinate-nucleotide--dimethylbenzimidazole phosphoribosyltransferase">
    <location>
        <begin position="1"/>
        <end position="350"/>
    </location>
</feature>
<feature type="active site" description="Proton acceptor" evidence="1">
    <location>
        <position position="318"/>
    </location>
</feature>
<evidence type="ECO:0000255" key="1">
    <source>
        <dbReference type="HAMAP-Rule" id="MF_00230"/>
    </source>
</evidence>
<protein>
    <recommendedName>
        <fullName evidence="1">Nicotinate-nucleotide--dimethylbenzimidazole phosphoribosyltransferase</fullName>
        <shortName evidence="1">NN:DBI PRT</shortName>
        <ecNumber evidence="1">2.4.2.21</ecNumber>
    </recommendedName>
    <alternativeName>
        <fullName evidence="1">N(1)-alpha-phosphoribosyltransferase</fullName>
    </alternativeName>
</protein>
<name>COBT_CITBB</name>